<protein>
    <recommendedName>
        <fullName>Uncharacterized protein ORFC4</fullName>
    </recommendedName>
</protein>
<organism>
    <name type="scientific">Pigeon circovirus</name>
    <name type="common">PiCV</name>
    <name type="synonym">Columbid circovirus</name>
    <dbReference type="NCBI Taxonomy" id="126070"/>
    <lineage>
        <taxon>Viruses</taxon>
        <taxon>Monodnaviria</taxon>
        <taxon>Shotokuvirae</taxon>
        <taxon>Cressdnaviricota</taxon>
        <taxon>Arfiviricetes</taxon>
        <taxon>Cirlivirales</taxon>
        <taxon>Circoviridae</taxon>
        <taxon>Circovirus</taxon>
        <taxon>Circovirus pigeon</taxon>
        <taxon>Pigeon circovirus</taxon>
    </lineage>
</organism>
<name>ORFC4_PICV</name>
<proteinExistence type="predicted"/>
<sequence>MGYFFIQSGASSNLSWFQTSHLLIRRKSAWTQHLSSLYQASGGLLLVTIITRDVNSTKAPFTGTLCGYRSVTRSSSQKGSQP</sequence>
<dbReference type="EMBL" id="AF252610">
    <property type="protein sequence ID" value="AAF74200.1"/>
    <property type="molecule type" value="Genomic_DNA"/>
</dbReference>
<dbReference type="EMBL" id="AJ298229">
    <property type="protein sequence ID" value="CAC50246.1"/>
    <property type="molecule type" value="Genomic_DNA"/>
</dbReference>
<dbReference type="EMBL" id="AJ298230">
    <property type="protein sequence ID" value="CAC50252.1"/>
    <property type="molecule type" value="Genomic_DNA"/>
</dbReference>
<dbReference type="RefSeq" id="NP_059529.1">
    <property type="nucleotide sequence ID" value="NC_002361.1"/>
</dbReference>
<dbReference type="KEGG" id="vg:1732747"/>
<dbReference type="Proteomes" id="UP000000473">
    <property type="component" value="Genome"/>
</dbReference>
<dbReference type="Proteomes" id="UP000122645">
    <property type="component" value="Genome"/>
</dbReference>
<dbReference type="Proteomes" id="UP000153502">
    <property type="component" value="Genome"/>
</dbReference>
<accession>Q9IG43</accession>
<organismHost>
    <name type="scientific">Columba livia</name>
    <name type="common">Rock dove</name>
    <dbReference type="NCBI Taxonomy" id="8932"/>
</organismHost>
<reference key="1">
    <citation type="journal article" date="2000" name="Arch. Virol.">
        <title>Cloning and sequencing of columbid circovirus (coCV), a new circovirus from pigeons.</title>
        <authorList>
            <person name="Mankertz A."/>
            <person name="Hattermann K."/>
            <person name="Ehlers B."/>
            <person name="Soike D."/>
        </authorList>
    </citation>
    <scope>NUCLEOTIDE SEQUENCE [GENOMIC DNA]</scope>
</reference>
<reference key="2">
    <citation type="journal article" date="2001" name="Virology">
        <title>Genome sequence determinations and analyses of novel circoviruses from goose and pigeon.</title>
        <authorList>
            <person name="Todd D."/>
            <person name="Weston J.H."/>
            <person name="Soike D."/>
            <person name="Smyth J.A."/>
        </authorList>
    </citation>
    <scope>NUCLEOTIDE SEQUENCE [GENOMIC DNA]</scope>
</reference>
<gene>
    <name type="ORF">ORFC4</name>
</gene>
<feature type="chain" id="PRO_0000319860" description="Uncharacterized protein ORFC4">
    <location>
        <begin position="1"/>
        <end position="82"/>
    </location>
</feature>